<keyword id="KW-0963">Cytoplasm</keyword>
<keyword id="KW-0378">Hydrolase</keyword>
<keyword id="KW-0520">NAD</keyword>
<keyword id="KW-0554">One-carbon metabolism</keyword>
<keyword id="KW-1185">Reference proteome</keyword>
<gene>
    <name evidence="1" type="primary">ahcY</name>
    <name type="ordered locus">bll5944</name>
</gene>
<name>SAHH_BRADU</name>
<sequence length="473" mass="52066">MNAKPGFTDYIVKDISLADFGRKELSLAETEMPGLMATREEFGPKQPLKGARIAGSLHMTIQTGVLIETLAALGADIRWVSCNIYSTQDHAAAAIAAAGIPVFAVKGETLTEYWDYTAKLFDWHGGGHPNMILDDGGDATMYVHLGLRAENGDTAFLDKPGSEEEEVFFALLKKQLKEKPKGYFAEIAKSIKGVSEETTTGVHRLYDMQKAGTLLWPAINVNDSVTKSKFDNLYGCRESLVDGIRRGTDVMMSGKVAMVAGFGDVGKGSAASLRQAGCRVMVSEVDPICALQAAMEGYEVVTMEDAAPRADIFVTATGNKDIITIEHMRAMKDRAIVCNIGHFDNEIQIAGLRNLKWTNIKPQVDEIEFPDKHRIIMLSEGRLVNLGNAMGHPSFVMSASFTNQTLAQIELFANNKDGKYKKEVYVLPKTLDEKVARLHLAKIGVKLTELRKDQADYIGVKQEGPYKSDHYRY</sequence>
<reference key="1">
    <citation type="journal article" date="2002" name="DNA Res.">
        <title>Complete genomic sequence of nitrogen-fixing symbiotic bacterium Bradyrhizobium japonicum USDA110.</title>
        <authorList>
            <person name="Kaneko T."/>
            <person name="Nakamura Y."/>
            <person name="Sato S."/>
            <person name="Minamisawa K."/>
            <person name="Uchiumi T."/>
            <person name="Sasamoto S."/>
            <person name="Watanabe A."/>
            <person name="Idesawa K."/>
            <person name="Iriguchi M."/>
            <person name="Kawashima K."/>
            <person name="Kohara M."/>
            <person name="Matsumoto M."/>
            <person name="Shimpo S."/>
            <person name="Tsuruoka H."/>
            <person name="Wada T."/>
            <person name="Yamada M."/>
            <person name="Tabata S."/>
        </authorList>
    </citation>
    <scope>NUCLEOTIDE SEQUENCE [LARGE SCALE GENOMIC DNA]</scope>
    <source>
        <strain>JCM 10833 / BCRC 13528 / IAM 13628 / NBRC 14792 / USDA 110</strain>
    </source>
</reference>
<evidence type="ECO:0000255" key="1">
    <source>
        <dbReference type="HAMAP-Rule" id="MF_00563"/>
    </source>
</evidence>
<accession>Q89HP6</accession>
<feature type="chain" id="PRO_0000116950" description="Adenosylhomocysteinase">
    <location>
        <begin position="1"/>
        <end position="473"/>
    </location>
</feature>
<feature type="binding site" evidence="1">
    <location>
        <position position="60"/>
    </location>
    <ligand>
        <name>substrate</name>
    </ligand>
</feature>
<feature type="binding site" evidence="1">
    <location>
        <position position="135"/>
    </location>
    <ligand>
        <name>substrate</name>
    </ligand>
</feature>
<feature type="binding site" evidence="1">
    <location>
        <position position="197"/>
    </location>
    <ligand>
        <name>substrate</name>
    </ligand>
</feature>
<feature type="binding site" evidence="1">
    <location>
        <begin position="198"/>
        <end position="200"/>
    </location>
    <ligand>
        <name>NAD(+)</name>
        <dbReference type="ChEBI" id="CHEBI:57540"/>
    </ligand>
</feature>
<feature type="binding site" evidence="1">
    <location>
        <position position="227"/>
    </location>
    <ligand>
        <name>substrate</name>
    </ligand>
</feature>
<feature type="binding site" evidence="1">
    <location>
        <position position="231"/>
    </location>
    <ligand>
        <name>substrate</name>
    </ligand>
</feature>
<feature type="binding site" evidence="1">
    <location>
        <position position="232"/>
    </location>
    <ligand>
        <name>NAD(+)</name>
        <dbReference type="ChEBI" id="CHEBI:57540"/>
    </ligand>
</feature>
<feature type="binding site" evidence="1">
    <location>
        <begin position="261"/>
        <end position="266"/>
    </location>
    <ligand>
        <name>NAD(+)</name>
        <dbReference type="ChEBI" id="CHEBI:57540"/>
    </ligand>
</feature>
<feature type="binding site" evidence="1">
    <location>
        <position position="284"/>
    </location>
    <ligand>
        <name>NAD(+)</name>
        <dbReference type="ChEBI" id="CHEBI:57540"/>
    </ligand>
</feature>
<feature type="binding site" evidence="1">
    <location>
        <position position="319"/>
    </location>
    <ligand>
        <name>NAD(+)</name>
        <dbReference type="ChEBI" id="CHEBI:57540"/>
    </ligand>
</feature>
<feature type="binding site" evidence="1">
    <location>
        <begin position="340"/>
        <end position="342"/>
    </location>
    <ligand>
        <name>NAD(+)</name>
        <dbReference type="ChEBI" id="CHEBI:57540"/>
    </ligand>
</feature>
<feature type="binding site" evidence="1">
    <location>
        <position position="385"/>
    </location>
    <ligand>
        <name>NAD(+)</name>
        <dbReference type="ChEBI" id="CHEBI:57540"/>
    </ligand>
</feature>
<proteinExistence type="inferred from homology"/>
<dbReference type="EC" id="3.13.2.1" evidence="1"/>
<dbReference type="EMBL" id="BA000040">
    <property type="protein sequence ID" value="BAC51209.1"/>
    <property type="molecule type" value="Genomic_DNA"/>
</dbReference>
<dbReference type="RefSeq" id="NP_772584.1">
    <property type="nucleotide sequence ID" value="NC_004463.1"/>
</dbReference>
<dbReference type="RefSeq" id="WP_011088685.1">
    <property type="nucleotide sequence ID" value="NC_004463.1"/>
</dbReference>
<dbReference type="SMR" id="Q89HP6"/>
<dbReference type="STRING" id="224911.AAV28_27260"/>
<dbReference type="EnsemblBacteria" id="BAC51209">
    <property type="protein sequence ID" value="BAC51209"/>
    <property type="gene ID" value="BAC51209"/>
</dbReference>
<dbReference type="GeneID" id="46492941"/>
<dbReference type="KEGG" id="bja:bll5944"/>
<dbReference type="PATRIC" id="fig|224911.44.peg.5894"/>
<dbReference type="eggNOG" id="COG0499">
    <property type="taxonomic scope" value="Bacteria"/>
</dbReference>
<dbReference type="HOGENOM" id="CLU_025194_2_1_5"/>
<dbReference type="InParanoid" id="Q89HP6"/>
<dbReference type="OrthoDB" id="9802717at2"/>
<dbReference type="PhylomeDB" id="Q89HP6"/>
<dbReference type="UniPathway" id="UPA00314">
    <property type="reaction ID" value="UER00076"/>
</dbReference>
<dbReference type="Proteomes" id="UP000002526">
    <property type="component" value="Chromosome"/>
</dbReference>
<dbReference type="GO" id="GO:0005829">
    <property type="term" value="C:cytosol"/>
    <property type="evidence" value="ECO:0000318"/>
    <property type="project" value="GO_Central"/>
</dbReference>
<dbReference type="GO" id="GO:0004013">
    <property type="term" value="F:adenosylhomocysteinase activity"/>
    <property type="evidence" value="ECO:0000318"/>
    <property type="project" value="GO_Central"/>
</dbReference>
<dbReference type="GO" id="GO:0071269">
    <property type="term" value="P:L-homocysteine biosynthetic process"/>
    <property type="evidence" value="ECO:0007669"/>
    <property type="project" value="UniProtKB-UniRule"/>
</dbReference>
<dbReference type="GO" id="GO:0006730">
    <property type="term" value="P:one-carbon metabolic process"/>
    <property type="evidence" value="ECO:0007669"/>
    <property type="project" value="UniProtKB-KW"/>
</dbReference>
<dbReference type="GO" id="GO:0033353">
    <property type="term" value="P:S-adenosylmethionine cycle"/>
    <property type="evidence" value="ECO:0000318"/>
    <property type="project" value="GO_Central"/>
</dbReference>
<dbReference type="CDD" id="cd00401">
    <property type="entry name" value="SAHH"/>
    <property type="match status" value="1"/>
</dbReference>
<dbReference type="FunFam" id="3.40.50.720:FF:000004">
    <property type="entry name" value="Adenosylhomocysteinase"/>
    <property type="match status" value="1"/>
</dbReference>
<dbReference type="Gene3D" id="3.40.50.1480">
    <property type="entry name" value="Adenosylhomocysteinase-like"/>
    <property type="match status" value="1"/>
</dbReference>
<dbReference type="Gene3D" id="3.40.50.720">
    <property type="entry name" value="NAD(P)-binding Rossmann-like Domain"/>
    <property type="match status" value="1"/>
</dbReference>
<dbReference type="HAMAP" id="MF_00563">
    <property type="entry name" value="AdoHcyase"/>
    <property type="match status" value="1"/>
</dbReference>
<dbReference type="InterPro" id="IPR042172">
    <property type="entry name" value="Adenosylhomocyst_ase-like_sf"/>
</dbReference>
<dbReference type="InterPro" id="IPR000043">
    <property type="entry name" value="Adenosylhomocysteinase-like"/>
</dbReference>
<dbReference type="InterPro" id="IPR015878">
    <property type="entry name" value="Ado_hCys_hydrolase_NAD-bd"/>
</dbReference>
<dbReference type="InterPro" id="IPR036291">
    <property type="entry name" value="NAD(P)-bd_dom_sf"/>
</dbReference>
<dbReference type="InterPro" id="IPR020082">
    <property type="entry name" value="S-Ado-L-homoCys_hydrolase_CS"/>
</dbReference>
<dbReference type="NCBIfam" id="TIGR00936">
    <property type="entry name" value="ahcY"/>
    <property type="match status" value="1"/>
</dbReference>
<dbReference type="NCBIfam" id="NF004005">
    <property type="entry name" value="PRK05476.2-3"/>
    <property type="match status" value="1"/>
</dbReference>
<dbReference type="PANTHER" id="PTHR23420">
    <property type="entry name" value="ADENOSYLHOMOCYSTEINASE"/>
    <property type="match status" value="1"/>
</dbReference>
<dbReference type="PANTHER" id="PTHR23420:SF0">
    <property type="entry name" value="ADENOSYLHOMOCYSTEINASE"/>
    <property type="match status" value="1"/>
</dbReference>
<dbReference type="Pfam" id="PF05221">
    <property type="entry name" value="AdoHcyase"/>
    <property type="match status" value="1"/>
</dbReference>
<dbReference type="Pfam" id="PF00670">
    <property type="entry name" value="AdoHcyase_NAD"/>
    <property type="match status" value="1"/>
</dbReference>
<dbReference type="PIRSF" id="PIRSF001109">
    <property type="entry name" value="Ad_hcy_hydrolase"/>
    <property type="match status" value="1"/>
</dbReference>
<dbReference type="SMART" id="SM00996">
    <property type="entry name" value="AdoHcyase"/>
    <property type="match status" value="1"/>
</dbReference>
<dbReference type="SMART" id="SM00997">
    <property type="entry name" value="AdoHcyase_NAD"/>
    <property type="match status" value="1"/>
</dbReference>
<dbReference type="SUPFAM" id="SSF52283">
    <property type="entry name" value="Formate/glycerate dehydrogenase catalytic domain-like"/>
    <property type="match status" value="1"/>
</dbReference>
<dbReference type="SUPFAM" id="SSF51735">
    <property type="entry name" value="NAD(P)-binding Rossmann-fold domains"/>
    <property type="match status" value="1"/>
</dbReference>
<dbReference type="PROSITE" id="PS00738">
    <property type="entry name" value="ADOHCYASE_1"/>
    <property type="match status" value="1"/>
</dbReference>
<dbReference type="PROSITE" id="PS00739">
    <property type="entry name" value="ADOHCYASE_2"/>
    <property type="match status" value="1"/>
</dbReference>
<organism>
    <name type="scientific">Bradyrhizobium diazoefficiens (strain JCM 10833 / BCRC 13528 / IAM 13628 / NBRC 14792 / USDA 110)</name>
    <dbReference type="NCBI Taxonomy" id="224911"/>
    <lineage>
        <taxon>Bacteria</taxon>
        <taxon>Pseudomonadati</taxon>
        <taxon>Pseudomonadota</taxon>
        <taxon>Alphaproteobacteria</taxon>
        <taxon>Hyphomicrobiales</taxon>
        <taxon>Nitrobacteraceae</taxon>
        <taxon>Bradyrhizobium</taxon>
    </lineage>
</organism>
<protein>
    <recommendedName>
        <fullName evidence="1">Adenosylhomocysteinase</fullName>
        <ecNumber evidence="1">3.13.2.1</ecNumber>
    </recommendedName>
    <alternativeName>
        <fullName evidence="1">S-adenosyl-L-homocysteine hydrolase</fullName>
        <shortName evidence="1">AdoHcyase</shortName>
    </alternativeName>
</protein>
<comment type="function">
    <text evidence="1">May play a key role in the regulation of the intracellular concentration of adenosylhomocysteine.</text>
</comment>
<comment type="catalytic activity">
    <reaction evidence="1">
        <text>S-adenosyl-L-homocysteine + H2O = L-homocysteine + adenosine</text>
        <dbReference type="Rhea" id="RHEA:21708"/>
        <dbReference type="ChEBI" id="CHEBI:15377"/>
        <dbReference type="ChEBI" id="CHEBI:16335"/>
        <dbReference type="ChEBI" id="CHEBI:57856"/>
        <dbReference type="ChEBI" id="CHEBI:58199"/>
        <dbReference type="EC" id="3.13.2.1"/>
    </reaction>
</comment>
<comment type="cofactor">
    <cofactor evidence="1">
        <name>NAD(+)</name>
        <dbReference type="ChEBI" id="CHEBI:57540"/>
    </cofactor>
    <text evidence="1">Binds 1 NAD(+) per subunit.</text>
</comment>
<comment type="pathway">
    <text evidence="1">Amino-acid biosynthesis; L-homocysteine biosynthesis; L-homocysteine from S-adenosyl-L-homocysteine: step 1/1.</text>
</comment>
<comment type="subcellular location">
    <subcellularLocation>
        <location evidence="1">Cytoplasm</location>
    </subcellularLocation>
</comment>
<comment type="similarity">
    <text evidence="1">Belongs to the adenosylhomocysteinase family.</text>
</comment>